<comment type="function">
    <text evidence="3">Capsid-specific restriction factor that prevents infection from non-host-adapted retroviruses. Blocks viral replication early in the life cycle, after viral entry but before reverse transcription. In addition to acting as a capsid-specific restriction factor, also acts as a pattern recognition receptor that activates innate immune signaling in response to the retroviral capsid lattice. Binding to the viral capsid triggers its E3 ubiquitin ligase activity, and in concert with the heterodimeric ubiquitin conjugating enzyme complex UBE2V1-UBE2N (also known as UBC13-UEV1A complex) generates 'Lys-63'-linked polyubiquitin chains, which in turn are catalysts in the autophosphorylation of the MAP3K7/TAK1 complex (includes TAK1, TAB2, and TAB3). Activation of the MAP3K7/TAK1 complex by autophosphorylation results in the induction and expression of NF-kappa-B and MAPK-responsive inflammatory genes, thereby leading to an innate immune response in the infected cell. Plays a role in regulating autophagy through activation of autophagy regulator BECN1 by causing its dissociation from its inhibitors BCL2 and TAB2.</text>
</comment>
<comment type="catalytic activity">
    <reaction>
        <text>S-ubiquitinyl-[E2 ubiquitin-conjugating enzyme]-L-cysteine + [acceptor protein]-L-lysine = [E2 ubiquitin-conjugating enzyme]-L-cysteine + N(6)-ubiquitinyl-[acceptor protein]-L-lysine.</text>
        <dbReference type="EC" id="2.3.2.27"/>
    </reaction>
</comment>
<comment type="pathway">
    <text>Protein modification; protein ubiquitination.</text>
</comment>
<comment type="subunit">
    <text evidence="2 3">Can form homodimers and homotrimers. In addition to lower-order dimerization, also exhibits a higher-order multimerization and both low- and high-order multimerizations are essential for its restriction activity. Interacts with BTBD1 and BTBD2. Interacts with PSMC4, PSMC5, PSMD7 and HSPA8/HSC70. Interacts (via B30.2/SPRY domain) with HSPA1A/B. Interacts with PSMC2, MAP3K7/TAK1, TAB2 and TAB3. Interacts with SQSTM1. Interacts with TRIM6 and TRIM34. Interacts with ULK1 (phosphorylated form), GABARAP, GABARAPL1, GABARAPL2, MAP1LC3A, MAP1LC3C and BECN1.</text>
</comment>
<comment type="subcellular location">
    <subcellularLocation>
        <location evidence="2">Cytoplasm</location>
    </subcellularLocation>
    <subcellularLocation>
        <location evidence="2">Nucleus</location>
    </subcellularLocation>
    <text evidence="2">Predominantly localizes in cytoplasmic bodies. Localization may be influenced by the coexpression of other TRIM proteins, hence partial nuclear localization is observed in the presence of TRIM22 or TRIM27. In cytoplasmic bodies, colocalizes with proteasomal subunits and SQSTM1.</text>
</comment>
<comment type="domain">
    <text evidence="2 3">The B box-type zinc finger domain and the coiled-coil domain contribute to the higher and low order multimerization respectively which is essential for restriction activity. The coiled coil domain is important for higher order multimerization by promoting the initial dimerization.</text>
</comment>
<comment type="domain">
    <text evidence="1">The B30.2/SPRY domain acts as a capsid recognition domain. Polymorphisms in this domain explain the observed species-specific differences among orthologs (By similarity).</text>
</comment>
<comment type="domain">
    <text evidence="1">The RING-type zinc finger domain confers E3 ubiquitin ligase activity and is essential for retrovirus restriction activity, autoubiquitination and higher-order multimerization.</text>
</comment>
<comment type="PTM">
    <text evidence="1">Degraded in a proteasome-independent fashion in the absence of viral infection but in a proteasome-dependent fashion following exposure to restriction sensitive virus.</text>
</comment>
<comment type="PTM">
    <text evidence="1">Autoubiquitinated in a RING finger- and UBE2D2-dependent manner. Monoubiquitinated by TRIM21. Deubiquitinated by Yersinia YopJ. Ubiquitination may not lead to proteasomal degradation (By similarity).</text>
</comment>
<comment type="similarity">
    <text evidence="8">Belongs to the TRIM/RBCC family.</text>
</comment>
<reference key="1">
    <citation type="journal article" date="2005" name="Proc. Natl. Acad. Sci. U.S.A.">
        <title>Positive selection of primate TRIM5alpha identifies a critical species-specific retroviral restriction domain.</title>
        <authorList>
            <person name="Sawyer S.L."/>
            <person name="Wu L.I."/>
            <person name="Emerman M."/>
            <person name="Malik H.S."/>
        </authorList>
    </citation>
    <scope>NUCLEOTIDE SEQUENCE [GENOMIC DNA]</scope>
</reference>
<proteinExistence type="inferred from homology"/>
<protein>
    <recommendedName>
        <fullName>Tripartite motif-containing protein 5</fullName>
        <ecNumber>2.3.2.27</ecNumber>
    </recommendedName>
    <alternativeName>
        <fullName evidence="8">RING-type E3 ubiquitin transferase TRIM5</fullName>
    </alternativeName>
    <alternativeName>
        <fullName>TRIM5alpha</fullName>
    </alternativeName>
</protein>
<name>TRIM5_LAGLA</name>
<accession>Q5D7H7</accession>
<sequence>MASEILVNIKEEVTCPICLDLLTEPLSLDCGHSFCQACITADHKESTLHQGERSCPLCRVGYQSENLRPNRHLANIAERLREVMLSPEEGQKVDRCARHGEKLLLFCQQHGNVICWLCERSQEHRGHSTFLVEEVAQKYREKLQVALEMMREKQQDAEKLEADVREEQASWKIQIKNDKTNILAEFKQLRDILDCEESNELQNLEKEEENLLKILAQSENDMVLQTQSMRVLIADLEHRLQGSVMELLQGVEGIIKRTTNVTLQKPKTFLNEKRRVFRAPNLKGMLQVFKELKEVQCYWAHVTLVPSHPSCAVISEDQRQVRYQKQRHRPSVKAKYFYGVLGSPSFTSGKHYWEVDVSNKSAWILGVCVSLKCTANVPGIENYQPKNGYWVIGLQNADNYSAFQDAVPGTEDYQPKNGCWRNTGLRNADNYSAFQDVFQPKNDYWVTGLWNADNYNAFQDAGKYSDFQDGSCSTPFAPLIVPLFMTIRPKRVGVFLDYEACTVSFFNVTSNGCLIYKFSNCHFSCPVFPYFSPMTCKLPMTLCSPSS</sequence>
<feature type="initiator methionine" description="Removed" evidence="3">
    <location>
        <position position="1"/>
    </location>
</feature>
<feature type="chain" id="PRO_0000273462" description="Tripartite motif-containing protein 5">
    <location>
        <begin position="2"/>
        <end position="547"/>
    </location>
</feature>
<feature type="domain" description="B30.2/SPRY" evidence="7">
    <location>
        <begin position="280"/>
        <end position="547"/>
    </location>
</feature>
<feature type="zinc finger region" description="RING-type" evidence="6">
    <location>
        <begin position="15"/>
        <end position="59"/>
    </location>
</feature>
<feature type="zinc finger region" description="B box-type" evidence="5">
    <location>
        <begin position="91"/>
        <end position="132"/>
    </location>
</feature>
<feature type="region of interest" description="Required for interaction with GABARAP and for autophagy" evidence="2">
    <location>
        <begin position="186"/>
        <end position="199"/>
    </location>
</feature>
<feature type="coiled-coil region" evidence="4">
    <location>
        <begin position="132"/>
        <end position="224"/>
    </location>
</feature>
<feature type="binding site" evidence="5">
    <location>
        <position position="96"/>
    </location>
    <ligand>
        <name>Zn(2+)</name>
        <dbReference type="ChEBI" id="CHEBI:29105"/>
    </ligand>
</feature>
<feature type="binding site" evidence="5">
    <location>
        <position position="99"/>
    </location>
    <ligand>
        <name>Zn(2+)</name>
        <dbReference type="ChEBI" id="CHEBI:29105"/>
    </ligand>
</feature>
<feature type="binding site" evidence="5">
    <location>
        <position position="118"/>
    </location>
    <ligand>
        <name>Zn(2+)</name>
        <dbReference type="ChEBI" id="CHEBI:29105"/>
    </ligand>
</feature>
<feature type="binding site" evidence="5">
    <location>
        <position position="124"/>
    </location>
    <ligand>
        <name>Zn(2+)</name>
        <dbReference type="ChEBI" id="CHEBI:29105"/>
    </ligand>
</feature>
<feature type="modified residue" description="N-acetylalanine" evidence="3">
    <location>
        <position position="2"/>
    </location>
</feature>
<feature type="modified residue" description="Phosphoserine" evidence="3">
    <location>
        <position position="86"/>
    </location>
</feature>
<organism>
    <name type="scientific">Lagothrix lagotricha</name>
    <name type="common">Brown woolly monkey</name>
    <name type="synonym">Humboldt's woolly monkey</name>
    <dbReference type="NCBI Taxonomy" id="9519"/>
    <lineage>
        <taxon>Eukaryota</taxon>
        <taxon>Metazoa</taxon>
        <taxon>Chordata</taxon>
        <taxon>Craniata</taxon>
        <taxon>Vertebrata</taxon>
        <taxon>Euteleostomi</taxon>
        <taxon>Mammalia</taxon>
        <taxon>Eutheria</taxon>
        <taxon>Euarchontoglires</taxon>
        <taxon>Primates</taxon>
        <taxon>Haplorrhini</taxon>
        <taxon>Platyrrhini</taxon>
        <taxon>Atelidae</taxon>
        <taxon>Atelinae</taxon>
        <taxon>Lagothrix</taxon>
    </lineage>
</organism>
<dbReference type="EC" id="2.3.2.27"/>
<dbReference type="EMBL" id="AY843520">
    <property type="protein sequence ID" value="AAV91991.1"/>
    <property type="molecule type" value="Genomic_DNA"/>
</dbReference>
<dbReference type="SMR" id="Q5D7H7"/>
<dbReference type="UniPathway" id="UPA00143"/>
<dbReference type="GO" id="GO:0005634">
    <property type="term" value="C:nucleus"/>
    <property type="evidence" value="ECO:0007669"/>
    <property type="project" value="UniProtKB-SubCell"/>
</dbReference>
<dbReference type="GO" id="GO:0000932">
    <property type="term" value="C:P-body"/>
    <property type="evidence" value="ECO:0000250"/>
    <property type="project" value="UniProtKB"/>
</dbReference>
<dbReference type="GO" id="GO:0038187">
    <property type="term" value="F:pattern recognition receptor activity"/>
    <property type="evidence" value="ECO:0000250"/>
    <property type="project" value="UniProtKB"/>
</dbReference>
<dbReference type="GO" id="GO:0004842">
    <property type="term" value="F:ubiquitin-protein transferase activity"/>
    <property type="evidence" value="ECO:0000250"/>
    <property type="project" value="UniProtKB"/>
</dbReference>
<dbReference type="GO" id="GO:0008270">
    <property type="term" value="F:zinc ion binding"/>
    <property type="evidence" value="ECO:0007669"/>
    <property type="project" value="UniProtKB-KW"/>
</dbReference>
<dbReference type="GO" id="GO:0002218">
    <property type="term" value="P:activation of innate immune response"/>
    <property type="evidence" value="ECO:0000250"/>
    <property type="project" value="UniProtKB"/>
</dbReference>
<dbReference type="GO" id="GO:0006914">
    <property type="term" value="P:autophagy"/>
    <property type="evidence" value="ECO:0007669"/>
    <property type="project" value="UniProtKB-KW"/>
</dbReference>
<dbReference type="GO" id="GO:0051607">
    <property type="term" value="P:defense response to virus"/>
    <property type="evidence" value="ECO:0007669"/>
    <property type="project" value="UniProtKB-KW"/>
</dbReference>
<dbReference type="GO" id="GO:0045087">
    <property type="term" value="P:innate immune response"/>
    <property type="evidence" value="ECO:0007669"/>
    <property type="project" value="UniProtKB-KW"/>
</dbReference>
<dbReference type="GO" id="GO:0043123">
    <property type="term" value="P:positive regulation of canonical NF-kappaB signal transduction"/>
    <property type="evidence" value="ECO:0000250"/>
    <property type="project" value="UniProtKB"/>
</dbReference>
<dbReference type="GO" id="GO:0043410">
    <property type="term" value="P:positive regulation of MAPK cascade"/>
    <property type="evidence" value="ECO:0000250"/>
    <property type="project" value="UniProtKB"/>
</dbReference>
<dbReference type="GO" id="GO:0051092">
    <property type="term" value="P:positive regulation of NF-kappaB transcription factor activity"/>
    <property type="evidence" value="ECO:0000250"/>
    <property type="project" value="UniProtKB"/>
</dbReference>
<dbReference type="GO" id="GO:0070534">
    <property type="term" value="P:protein K63-linked ubiquitination"/>
    <property type="evidence" value="ECO:0000250"/>
    <property type="project" value="UniProtKB"/>
</dbReference>
<dbReference type="GO" id="GO:0031664">
    <property type="term" value="P:regulation of lipopolysaccharide-mediated signaling pathway"/>
    <property type="evidence" value="ECO:0000250"/>
    <property type="project" value="UniProtKB"/>
</dbReference>
<dbReference type="CDD" id="cd19761">
    <property type="entry name" value="Bbox2_TRIM5-like"/>
    <property type="match status" value="1"/>
</dbReference>
<dbReference type="CDD" id="cd16591">
    <property type="entry name" value="RING-HC_TRIM5-like_C-IV"/>
    <property type="match status" value="1"/>
</dbReference>
<dbReference type="FunFam" id="3.30.160.60:FF:000386">
    <property type="entry name" value="Tripartite motif-containing 5 (Predicted)"/>
    <property type="match status" value="1"/>
</dbReference>
<dbReference type="FunFam" id="3.30.40.10:FF:000144">
    <property type="entry name" value="Tripartite motif-containing 5 (Predicted)"/>
    <property type="match status" value="1"/>
</dbReference>
<dbReference type="FunFam" id="2.60.120.920:FF:000107">
    <property type="entry name" value="Tripartite motif-containing protein 5"/>
    <property type="match status" value="1"/>
</dbReference>
<dbReference type="FunFam" id="2.60.120.920:FF:000108">
    <property type="entry name" value="Tripartite motif-containing protein 5"/>
    <property type="match status" value="1"/>
</dbReference>
<dbReference type="Gene3D" id="2.60.120.920">
    <property type="match status" value="2"/>
</dbReference>
<dbReference type="Gene3D" id="3.30.160.60">
    <property type="entry name" value="Classic Zinc Finger"/>
    <property type="match status" value="1"/>
</dbReference>
<dbReference type="Gene3D" id="3.30.40.10">
    <property type="entry name" value="Zinc/RING finger domain, C3HC4 (zinc finger)"/>
    <property type="match status" value="1"/>
</dbReference>
<dbReference type="InterPro" id="IPR001870">
    <property type="entry name" value="B30.2/SPRY"/>
</dbReference>
<dbReference type="InterPro" id="IPR043136">
    <property type="entry name" value="B30.2/SPRY_sf"/>
</dbReference>
<dbReference type="InterPro" id="IPR003879">
    <property type="entry name" value="Butyrophylin_SPRY"/>
</dbReference>
<dbReference type="InterPro" id="IPR013320">
    <property type="entry name" value="ConA-like_dom_sf"/>
</dbReference>
<dbReference type="InterPro" id="IPR003877">
    <property type="entry name" value="SPRY_dom"/>
</dbReference>
<dbReference type="InterPro" id="IPR050143">
    <property type="entry name" value="TRIM/RBCC"/>
</dbReference>
<dbReference type="InterPro" id="IPR027370">
    <property type="entry name" value="Znf-RING_euk"/>
</dbReference>
<dbReference type="InterPro" id="IPR000315">
    <property type="entry name" value="Znf_B-box"/>
</dbReference>
<dbReference type="InterPro" id="IPR001841">
    <property type="entry name" value="Znf_RING"/>
</dbReference>
<dbReference type="InterPro" id="IPR013083">
    <property type="entry name" value="Znf_RING/FYVE/PHD"/>
</dbReference>
<dbReference type="InterPro" id="IPR017907">
    <property type="entry name" value="Znf_RING_CS"/>
</dbReference>
<dbReference type="PANTHER" id="PTHR24103">
    <property type="entry name" value="E3 UBIQUITIN-PROTEIN LIGASE TRIM"/>
    <property type="match status" value="1"/>
</dbReference>
<dbReference type="Pfam" id="PF00622">
    <property type="entry name" value="SPRY"/>
    <property type="match status" value="1"/>
</dbReference>
<dbReference type="Pfam" id="PF00643">
    <property type="entry name" value="zf-B_box"/>
    <property type="match status" value="1"/>
</dbReference>
<dbReference type="Pfam" id="PF13445">
    <property type="entry name" value="zf-RING_UBOX"/>
    <property type="match status" value="1"/>
</dbReference>
<dbReference type="PRINTS" id="PR01407">
    <property type="entry name" value="BUTYPHLNCDUF"/>
</dbReference>
<dbReference type="SMART" id="SM00336">
    <property type="entry name" value="BBOX"/>
    <property type="match status" value="1"/>
</dbReference>
<dbReference type="SMART" id="SM00184">
    <property type="entry name" value="RING"/>
    <property type="match status" value="1"/>
</dbReference>
<dbReference type="SMART" id="SM00449">
    <property type="entry name" value="SPRY"/>
    <property type="match status" value="1"/>
</dbReference>
<dbReference type="SUPFAM" id="SSF57845">
    <property type="entry name" value="B-box zinc-binding domain"/>
    <property type="match status" value="1"/>
</dbReference>
<dbReference type="SUPFAM" id="SSF49899">
    <property type="entry name" value="Concanavalin A-like lectins/glucanases"/>
    <property type="match status" value="2"/>
</dbReference>
<dbReference type="SUPFAM" id="SSF57850">
    <property type="entry name" value="RING/U-box"/>
    <property type="match status" value="1"/>
</dbReference>
<dbReference type="PROSITE" id="PS50188">
    <property type="entry name" value="B302_SPRY"/>
    <property type="match status" value="1"/>
</dbReference>
<dbReference type="PROSITE" id="PS50119">
    <property type="entry name" value="ZF_BBOX"/>
    <property type="match status" value="1"/>
</dbReference>
<dbReference type="PROSITE" id="PS00518">
    <property type="entry name" value="ZF_RING_1"/>
    <property type="match status" value="1"/>
</dbReference>
<dbReference type="PROSITE" id="PS50089">
    <property type="entry name" value="ZF_RING_2"/>
    <property type="match status" value="1"/>
</dbReference>
<keyword id="KW-0007">Acetylation</keyword>
<keyword id="KW-0051">Antiviral defense</keyword>
<keyword id="KW-0072">Autophagy</keyword>
<keyword id="KW-0175">Coiled coil</keyword>
<keyword id="KW-0963">Cytoplasm</keyword>
<keyword id="KW-0391">Immunity</keyword>
<keyword id="KW-0399">Innate immunity</keyword>
<keyword id="KW-0479">Metal-binding</keyword>
<keyword id="KW-0539">Nucleus</keyword>
<keyword id="KW-0597">Phosphoprotein</keyword>
<keyword id="KW-0808">Transferase</keyword>
<keyword id="KW-0832">Ubl conjugation</keyword>
<keyword id="KW-0833">Ubl conjugation pathway</keyword>
<keyword id="KW-0862">Zinc</keyword>
<keyword id="KW-0863">Zinc-finger</keyword>
<evidence type="ECO:0000250" key="1"/>
<evidence type="ECO:0000250" key="2">
    <source>
        <dbReference type="UniProtKB" id="Q0PF16"/>
    </source>
</evidence>
<evidence type="ECO:0000250" key="3">
    <source>
        <dbReference type="UniProtKB" id="Q9C035"/>
    </source>
</evidence>
<evidence type="ECO:0000255" key="4"/>
<evidence type="ECO:0000255" key="5">
    <source>
        <dbReference type="PROSITE-ProRule" id="PRU00024"/>
    </source>
</evidence>
<evidence type="ECO:0000255" key="6">
    <source>
        <dbReference type="PROSITE-ProRule" id="PRU00175"/>
    </source>
</evidence>
<evidence type="ECO:0000255" key="7">
    <source>
        <dbReference type="PROSITE-ProRule" id="PRU00548"/>
    </source>
</evidence>
<evidence type="ECO:0000305" key="8"/>
<gene>
    <name type="primary">TRIM5</name>
</gene>